<dbReference type="EC" id="5.1.1.1" evidence="1"/>
<dbReference type="EMBL" id="AE016824">
    <property type="protein sequence ID" value="AAS72263.1"/>
    <property type="molecule type" value="Genomic_DNA"/>
</dbReference>
<dbReference type="SMR" id="Q75FF2"/>
<dbReference type="KEGG" id="lic:LIC_20241"/>
<dbReference type="HOGENOM" id="CLU_028393_2_2_12"/>
<dbReference type="UniPathway" id="UPA00042">
    <property type="reaction ID" value="UER00497"/>
</dbReference>
<dbReference type="Proteomes" id="UP000007037">
    <property type="component" value="Chromosome II"/>
</dbReference>
<dbReference type="GO" id="GO:0005829">
    <property type="term" value="C:cytosol"/>
    <property type="evidence" value="ECO:0007669"/>
    <property type="project" value="TreeGrafter"/>
</dbReference>
<dbReference type="GO" id="GO:0008784">
    <property type="term" value="F:alanine racemase activity"/>
    <property type="evidence" value="ECO:0007669"/>
    <property type="project" value="UniProtKB-UniRule"/>
</dbReference>
<dbReference type="GO" id="GO:0030170">
    <property type="term" value="F:pyridoxal phosphate binding"/>
    <property type="evidence" value="ECO:0007669"/>
    <property type="project" value="UniProtKB-UniRule"/>
</dbReference>
<dbReference type="GO" id="GO:0030632">
    <property type="term" value="P:D-alanine biosynthetic process"/>
    <property type="evidence" value="ECO:0007669"/>
    <property type="project" value="UniProtKB-UniRule"/>
</dbReference>
<dbReference type="CDD" id="cd00430">
    <property type="entry name" value="PLPDE_III_AR"/>
    <property type="match status" value="1"/>
</dbReference>
<dbReference type="FunFam" id="3.20.20.10:FF:000002">
    <property type="entry name" value="Alanine racemase"/>
    <property type="match status" value="1"/>
</dbReference>
<dbReference type="Gene3D" id="3.20.20.10">
    <property type="entry name" value="Alanine racemase"/>
    <property type="match status" value="1"/>
</dbReference>
<dbReference type="Gene3D" id="2.40.37.10">
    <property type="entry name" value="Lyase, Ornithine Decarboxylase, Chain A, domain 1"/>
    <property type="match status" value="1"/>
</dbReference>
<dbReference type="HAMAP" id="MF_01201">
    <property type="entry name" value="Ala_racemase"/>
    <property type="match status" value="1"/>
</dbReference>
<dbReference type="InterPro" id="IPR000821">
    <property type="entry name" value="Ala_racemase"/>
</dbReference>
<dbReference type="InterPro" id="IPR009006">
    <property type="entry name" value="Ala_racemase/Decarboxylase_C"/>
</dbReference>
<dbReference type="InterPro" id="IPR011079">
    <property type="entry name" value="Ala_racemase_C"/>
</dbReference>
<dbReference type="InterPro" id="IPR001608">
    <property type="entry name" value="Ala_racemase_N"/>
</dbReference>
<dbReference type="InterPro" id="IPR020622">
    <property type="entry name" value="Ala_racemase_pyridoxalP-BS"/>
</dbReference>
<dbReference type="InterPro" id="IPR029066">
    <property type="entry name" value="PLP-binding_barrel"/>
</dbReference>
<dbReference type="NCBIfam" id="TIGR00492">
    <property type="entry name" value="alr"/>
    <property type="match status" value="1"/>
</dbReference>
<dbReference type="PANTHER" id="PTHR30511">
    <property type="entry name" value="ALANINE RACEMASE"/>
    <property type="match status" value="1"/>
</dbReference>
<dbReference type="PANTHER" id="PTHR30511:SF0">
    <property type="entry name" value="ALANINE RACEMASE, CATABOLIC-RELATED"/>
    <property type="match status" value="1"/>
</dbReference>
<dbReference type="Pfam" id="PF00842">
    <property type="entry name" value="Ala_racemase_C"/>
    <property type="match status" value="1"/>
</dbReference>
<dbReference type="Pfam" id="PF01168">
    <property type="entry name" value="Ala_racemase_N"/>
    <property type="match status" value="1"/>
</dbReference>
<dbReference type="PRINTS" id="PR00992">
    <property type="entry name" value="ALARACEMASE"/>
</dbReference>
<dbReference type="SMART" id="SM01005">
    <property type="entry name" value="Ala_racemase_C"/>
    <property type="match status" value="1"/>
</dbReference>
<dbReference type="SUPFAM" id="SSF50621">
    <property type="entry name" value="Alanine racemase C-terminal domain-like"/>
    <property type="match status" value="1"/>
</dbReference>
<dbReference type="SUPFAM" id="SSF51419">
    <property type="entry name" value="PLP-binding barrel"/>
    <property type="match status" value="1"/>
</dbReference>
<dbReference type="PROSITE" id="PS00395">
    <property type="entry name" value="ALANINE_RACEMASE"/>
    <property type="match status" value="1"/>
</dbReference>
<evidence type="ECO:0000255" key="1">
    <source>
        <dbReference type="HAMAP-Rule" id="MF_01201"/>
    </source>
</evidence>
<proteinExistence type="inferred from homology"/>
<sequence>MQDINSGSSSMKDTYSSWIEISKRSLSNNLDNFRSILRPNSTLTAILKSNAYGHGIEPMTRLCIEAGISRIGVNSIEEALLIRNIDSKIPILIMGEIQNPEKRKNVLSDPNFWIVFSRPETARILSSFLPAPKLHLKIDTGMGRLGSHGETLKQTLSELKNVGITLGGICTHFASTEDVLEHKYSLMQTQKFEEAIFLAKSFGYNHLIRHACASASTMLFPNAHFDMVRIGISLYGLWPSIQTRLSLNLTGNKNFQLNPILSWKSRIVHIQYHPADSYIGYGSTFQTSYPTKVAIVPVGYYEGLDRKLSSNGDMLVLGKKARIIGRICMNMTMLDVTHIPGAEVGSIVTIIGQDGEESITADDLADRTHTINYEVMTRISESIPRIVVD</sequence>
<organism>
    <name type="scientific">Leptospira interrogans serogroup Icterohaemorrhagiae serovar copenhageni (strain Fiocruz L1-130)</name>
    <dbReference type="NCBI Taxonomy" id="267671"/>
    <lineage>
        <taxon>Bacteria</taxon>
        <taxon>Pseudomonadati</taxon>
        <taxon>Spirochaetota</taxon>
        <taxon>Spirochaetia</taxon>
        <taxon>Leptospirales</taxon>
        <taxon>Leptospiraceae</taxon>
        <taxon>Leptospira</taxon>
    </lineage>
</organism>
<gene>
    <name type="primary">alr</name>
    <name type="ordered locus">LIC_20241</name>
</gene>
<keyword id="KW-0413">Isomerase</keyword>
<keyword id="KW-0663">Pyridoxal phosphate</keyword>
<protein>
    <recommendedName>
        <fullName evidence="1">Alanine racemase</fullName>
        <ecNumber evidence="1">5.1.1.1</ecNumber>
    </recommendedName>
</protein>
<feature type="chain" id="PRO_0000114530" description="Alanine racemase">
    <location>
        <begin position="1"/>
        <end position="389"/>
    </location>
</feature>
<feature type="active site" description="Proton acceptor; specific for D-alanine" evidence="1">
    <location>
        <position position="48"/>
    </location>
</feature>
<feature type="active site" description="Proton acceptor; specific for L-alanine" evidence="1">
    <location>
        <position position="281"/>
    </location>
</feature>
<feature type="binding site" evidence="1">
    <location>
        <position position="144"/>
    </location>
    <ligand>
        <name>substrate</name>
    </ligand>
</feature>
<feature type="binding site" evidence="1">
    <location>
        <position position="329"/>
    </location>
    <ligand>
        <name>substrate</name>
    </ligand>
</feature>
<feature type="modified residue" description="N6-(pyridoxal phosphate)lysine" evidence="1">
    <location>
        <position position="48"/>
    </location>
</feature>
<name>ALR_LEPIC</name>
<comment type="function">
    <text evidence="1">Catalyzes the interconversion of L-alanine and D-alanine. May also act on other amino acids.</text>
</comment>
<comment type="catalytic activity">
    <reaction evidence="1">
        <text>L-alanine = D-alanine</text>
        <dbReference type="Rhea" id="RHEA:20249"/>
        <dbReference type="ChEBI" id="CHEBI:57416"/>
        <dbReference type="ChEBI" id="CHEBI:57972"/>
        <dbReference type="EC" id="5.1.1.1"/>
    </reaction>
</comment>
<comment type="cofactor">
    <cofactor evidence="1">
        <name>pyridoxal 5'-phosphate</name>
        <dbReference type="ChEBI" id="CHEBI:597326"/>
    </cofactor>
</comment>
<comment type="pathway">
    <text evidence="1">Amino-acid biosynthesis; D-alanine biosynthesis; D-alanine from L-alanine: step 1/1.</text>
</comment>
<comment type="similarity">
    <text evidence="1">Belongs to the alanine racemase family.</text>
</comment>
<reference key="1">
    <citation type="journal article" date="2004" name="J. Bacteriol.">
        <title>Comparative genomics of two Leptospira interrogans serovars reveals novel insights into physiology and pathogenesis.</title>
        <authorList>
            <person name="Nascimento A.L.T.O."/>
            <person name="Ko A.I."/>
            <person name="Martins E.A.L."/>
            <person name="Monteiro-Vitorello C.B."/>
            <person name="Ho P.L."/>
            <person name="Haake D.A."/>
            <person name="Verjovski-Almeida S."/>
            <person name="Hartskeerl R.A."/>
            <person name="Marques M.V."/>
            <person name="Oliveira M.C."/>
            <person name="Menck C.F.M."/>
            <person name="Leite L.C.C."/>
            <person name="Carrer H."/>
            <person name="Coutinho L.L."/>
            <person name="Degrave W.M."/>
            <person name="Dellagostin O.A."/>
            <person name="El-Dorry H."/>
            <person name="Ferro E.S."/>
            <person name="Ferro M.I.T."/>
            <person name="Furlan L.R."/>
            <person name="Gamberini M."/>
            <person name="Giglioti E.A."/>
            <person name="Goes-Neto A."/>
            <person name="Goldman G.H."/>
            <person name="Goldman M.H.S."/>
            <person name="Harakava R."/>
            <person name="Jeronimo S.M.B."/>
            <person name="Junqueira-de-Azevedo I.L.M."/>
            <person name="Kimura E.T."/>
            <person name="Kuramae E.E."/>
            <person name="Lemos E.G.M."/>
            <person name="Lemos M.V.F."/>
            <person name="Marino C.L."/>
            <person name="Nunes L.R."/>
            <person name="de Oliveira R.C."/>
            <person name="Pereira G.G."/>
            <person name="Reis M.S."/>
            <person name="Schriefer A."/>
            <person name="Siqueira W.J."/>
            <person name="Sommer P."/>
            <person name="Tsai S.M."/>
            <person name="Simpson A.J.G."/>
            <person name="Ferro J.A."/>
            <person name="Camargo L.E.A."/>
            <person name="Kitajima J.P."/>
            <person name="Setubal J.C."/>
            <person name="Van Sluys M.A."/>
        </authorList>
    </citation>
    <scope>NUCLEOTIDE SEQUENCE [LARGE SCALE GENOMIC DNA]</scope>
    <source>
        <strain>Fiocruz L1-130</strain>
    </source>
</reference>
<accession>Q75FF2</accession>